<evidence type="ECO:0000255" key="1">
    <source>
        <dbReference type="HAMAP-Rule" id="MF_00293"/>
    </source>
</evidence>
<organism>
    <name type="scientific">Lemna minor</name>
    <name type="common">Common duckweed</name>
    <dbReference type="NCBI Taxonomy" id="4472"/>
    <lineage>
        <taxon>Eukaryota</taxon>
        <taxon>Viridiplantae</taxon>
        <taxon>Streptophyta</taxon>
        <taxon>Embryophyta</taxon>
        <taxon>Tracheophyta</taxon>
        <taxon>Spermatophyta</taxon>
        <taxon>Magnoliopsida</taxon>
        <taxon>Liliopsida</taxon>
        <taxon>Araceae</taxon>
        <taxon>Lemnoideae</taxon>
        <taxon>Lemna</taxon>
    </lineage>
</organism>
<accession>A9L9C4</accession>
<keyword id="KW-0150">Chloroplast</keyword>
<keyword id="KW-0472">Membrane</keyword>
<keyword id="KW-0934">Plastid</keyword>
<keyword id="KW-0793">Thylakoid</keyword>
<keyword id="KW-0812">Transmembrane</keyword>
<keyword id="KW-1133">Transmembrane helix</keyword>
<geneLocation type="chloroplast"/>
<feature type="chain" id="PRO_0000362198" description="Protein PsbN">
    <location>
        <begin position="1"/>
        <end position="43"/>
    </location>
</feature>
<feature type="transmembrane region" description="Helical" evidence="1">
    <location>
        <begin position="5"/>
        <end position="27"/>
    </location>
</feature>
<reference key="1">
    <citation type="journal article" date="2008" name="J. Mol. Evol.">
        <title>Complete sequence of the Duckweed (Lemna minor) chloroplast genome: structural organization and phylogenetic relationships to other angiosperms.</title>
        <authorList>
            <person name="Mardanov A.V."/>
            <person name="Ravin N.V."/>
            <person name="Kuznetsov B.B."/>
            <person name="Samigullin T.H."/>
            <person name="Antonov A.S."/>
            <person name="Kolganova T.V."/>
            <person name="Skyabin K.G."/>
        </authorList>
    </citation>
    <scope>NUCLEOTIDE SEQUENCE [LARGE SCALE GENOMIC DNA]</scope>
</reference>
<comment type="function">
    <text evidence="1">May play a role in photosystem I and II biogenesis.</text>
</comment>
<comment type="subcellular location">
    <subcellularLocation>
        <location evidence="1">Plastid</location>
        <location evidence="1">Chloroplast thylakoid membrane</location>
        <topology evidence="1">Single-pass membrane protein</topology>
    </subcellularLocation>
</comment>
<comment type="similarity">
    <text evidence="1">Belongs to the PsbN family.</text>
</comment>
<comment type="caution">
    <text evidence="1">Originally thought to be a component of PSII; based on experiments in Synechocystis, N.tabacum and barley, and its absence from PSII in T.elongatus and T.vulcanus, this is probably not true.</text>
</comment>
<sequence>METATLVAISISGLLVSFTGYALYTAFGQPSQQLRDPFEEHGD</sequence>
<protein>
    <recommendedName>
        <fullName evidence="1">Protein PsbN</fullName>
    </recommendedName>
</protein>
<dbReference type="EMBL" id="DQ400350">
    <property type="protein sequence ID" value="ABD48523.1"/>
    <property type="molecule type" value="Genomic_DNA"/>
</dbReference>
<dbReference type="RefSeq" id="YP_001595536.1">
    <property type="nucleotide sequence ID" value="NC_010109.1"/>
</dbReference>
<dbReference type="SMR" id="A9L9C4"/>
<dbReference type="GeneID" id="5787544"/>
<dbReference type="GO" id="GO:0009535">
    <property type="term" value="C:chloroplast thylakoid membrane"/>
    <property type="evidence" value="ECO:0007669"/>
    <property type="project" value="UniProtKB-SubCell"/>
</dbReference>
<dbReference type="GO" id="GO:0015979">
    <property type="term" value="P:photosynthesis"/>
    <property type="evidence" value="ECO:0007669"/>
    <property type="project" value="InterPro"/>
</dbReference>
<dbReference type="HAMAP" id="MF_00293">
    <property type="entry name" value="PSII_PsbN"/>
    <property type="match status" value="1"/>
</dbReference>
<dbReference type="InterPro" id="IPR003398">
    <property type="entry name" value="PSII_PsbN"/>
</dbReference>
<dbReference type="PANTHER" id="PTHR35326">
    <property type="entry name" value="PROTEIN PSBN"/>
    <property type="match status" value="1"/>
</dbReference>
<dbReference type="PANTHER" id="PTHR35326:SF3">
    <property type="entry name" value="PROTEIN PSBN"/>
    <property type="match status" value="1"/>
</dbReference>
<dbReference type="Pfam" id="PF02468">
    <property type="entry name" value="PsbN"/>
    <property type="match status" value="1"/>
</dbReference>
<gene>
    <name evidence="1" type="primary">psbN</name>
</gene>
<name>PSBN_LEMMI</name>
<proteinExistence type="inferred from homology"/>